<dbReference type="EC" id="2.5.1.19" evidence="1"/>
<dbReference type="EMBL" id="BX571864">
    <property type="protein sequence ID" value="CAE13913.1"/>
    <property type="molecule type" value="Genomic_DNA"/>
</dbReference>
<dbReference type="RefSeq" id="WP_011145912.1">
    <property type="nucleotide sequence ID" value="NC_005126.1"/>
</dbReference>
<dbReference type="SMR" id="Q7N6D5"/>
<dbReference type="STRING" id="243265.plu1620"/>
<dbReference type="GeneID" id="48847908"/>
<dbReference type="KEGG" id="plu:plu1620"/>
<dbReference type="eggNOG" id="COG0128">
    <property type="taxonomic scope" value="Bacteria"/>
</dbReference>
<dbReference type="HOGENOM" id="CLU_024321_0_0_6"/>
<dbReference type="OrthoDB" id="9809920at2"/>
<dbReference type="UniPathway" id="UPA00053">
    <property type="reaction ID" value="UER00089"/>
</dbReference>
<dbReference type="Proteomes" id="UP000002514">
    <property type="component" value="Chromosome"/>
</dbReference>
<dbReference type="GO" id="GO:0005737">
    <property type="term" value="C:cytoplasm"/>
    <property type="evidence" value="ECO:0007669"/>
    <property type="project" value="UniProtKB-SubCell"/>
</dbReference>
<dbReference type="GO" id="GO:0003866">
    <property type="term" value="F:3-phosphoshikimate 1-carboxyvinyltransferase activity"/>
    <property type="evidence" value="ECO:0007669"/>
    <property type="project" value="UniProtKB-UniRule"/>
</dbReference>
<dbReference type="GO" id="GO:0008652">
    <property type="term" value="P:amino acid biosynthetic process"/>
    <property type="evidence" value="ECO:0007669"/>
    <property type="project" value="UniProtKB-KW"/>
</dbReference>
<dbReference type="GO" id="GO:0009073">
    <property type="term" value="P:aromatic amino acid family biosynthetic process"/>
    <property type="evidence" value="ECO:0007669"/>
    <property type="project" value="UniProtKB-KW"/>
</dbReference>
<dbReference type="GO" id="GO:0009423">
    <property type="term" value="P:chorismate biosynthetic process"/>
    <property type="evidence" value="ECO:0007669"/>
    <property type="project" value="UniProtKB-UniRule"/>
</dbReference>
<dbReference type="CDD" id="cd01556">
    <property type="entry name" value="EPSP_synthase"/>
    <property type="match status" value="1"/>
</dbReference>
<dbReference type="FunFam" id="3.65.10.10:FF:000003">
    <property type="entry name" value="3-phosphoshikimate 1-carboxyvinyltransferase"/>
    <property type="match status" value="1"/>
</dbReference>
<dbReference type="FunFam" id="3.65.10.10:FF:000004">
    <property type="entry name" value="3-phosphoshikimate 1-carboxyvinyltransferase"/>
    <property type="match status" value="1"/>
</dbReference>
<dbReference type="Gene3D" id="3.65.10.10">
    <property type="entry name" value="Enolpyruvate transferase domain"/>
    <property type="match status" value="2"/>
</dbReference>
<dbReference type="HAMAP" id="MF_00210">
    <property type="entry name" value="EPSP_synth"/>
    <property type="match status" value="1"/>
</dbReference>
<dbReference type="InterPro" id="IPR001986">
    <property type="entry name" value="Enolpyruvate_Tfrase_dom"/>
</dbReference>
<dbReference type="InterPro" id="IPR036968">
    <property type="entry name" value="Enolpyruvate_Tfrase_sf"/>
</dbReference>
<dbReference type="InterPro" id="IPR006264">
    <property type="entry name" value="EPSP_synthase"/>
</dbReference>
<dbReference type="InterPro" id="IPR023193">
    <property type="entry name" value="EPSP_synthase_CS"/>
</dbReference>
<dbReference type="InterPro" id="IPR013792">
    <property type="entry name" value="RNA3'P_cycl/enolpyr_Trfase_a/b"/>
</dbReference>
<dbReference type="NCBIfam" id="TIGR01356">
    <property type="entry name" value="aroA"/>
    <property type="match status" value="1"/>
</dbReference>
<dbReference type="PANTHER" id="PTHR21090">
    <property type="entry name" value="AROM/DEHYDROQUINATE SYNTHASE"/>
    <property type="match status" value="1"/>
</dbReference>
<dbReference type="PANTHER" id="PTHR21090:SF5">
    <property type="entry name" value="PENTAFUNCTIONAL AROM POLYPEPTIDE"/>
    <property type="match status" value="1"/>
</dbReference>
<dbReference type="Pfam" id="PF00275">
    <property type="entry name" value="EPSP_synthase"/>
    <property type="match status" value="1"/>
</dbReference>
<dbReference type="PIRSF" id="PIRSF000505">
    <property type="entry name" value="EPSPS"/>
    <property type="match status" value="1"/>
</dbReference>
<dbReference type="SUPFAM" id="SSF55205">
    <property type="entry name" value="EPT/RTPC-like"/>
    <property type="match status" value="1"/>
</dbReference>
<dbReference type="PROSITE" id="PS00104">
    <property type="entry name" value="EPSP_SYNTHASE_1"/>
    <property type="match status" value="1"/>
</dbReference>
<dbReference type="PROSITE" id="PS00885">
    <property type="entry name" value="EPSP_SYNTHASE_2"/>
    <property type="match status" value="1"/>
</dbReference>
<name>AROA_PHOLL</name>
<keyword id="KW-0028">Amino-acid biosynthesis</keyword>
<keyword id="KW-0057">Aromatic amino acid biosynthesis</keyword>
<keyword id="KW-0963">Cytoplasm</keyword>
<keyword id="KW-1185">Reference proteome</keyword>
<keyword id="KW-0808">Transferase</keyword>
<feature type="chain" id="PRO_0000325369" description="3-phosphoshikimate 1-carboxyvinyltransferase">
    <location>
        <begin position="1"/>
        <end position="428"/>
    </location>
</feature>
<feature type="active site" description="Proton acceptor" evidence="1">
    <location>
        <position position="313"/>
    </location>
</feature>
<feature type="binding site" evidence="1">
    <location>
        <position position="22"/>
    </location>
    <ligand>
        <name>3-phosphoshikimate</name>
        <dbReference type="ChEBI" id="CHEBI:145989"/>
    </ligand>
</feature>
<feature type="binding site" evidence="1">
    <location>
        <position position="22"/>
    </location>
    <ligand>
        <name>phosphoenolpyruvate</name>
        <dbReference type="ChEBI" id="CHEBI:58702"/>
    </ligand>
</feature>
<feature type="binding site" evidence="1">
    <location>
        <position position="23"/>
    </location>
    <ligand>
        <name>3-phosphoshikimate</name>
        <dbReference type="ChEBI" id="CHEBI:145989"/>
    </ligand>
</feature>
<feature type="binding site" evidence="1">
    <location>
        <position position="27"/>
    </location>
    <ligand>
        <name>3-phosphoshikimate</name>
        <dbReference type="ChEBI" id="CHEBI:145989"/>
    </ligand>
</feature>
<feature type="binding site" evidence="1">
    <location>
        <position position="96"/>
    </location>
    <ligand>
        <name>phosphoenolpyruvate</name>
        <dbReference type="ChEBI" id="CHEBI:58702"/>
    </ligand>
</feature>
<feature type="binding site" evidence="1">
    <location>
        <position position="124"/>
    </location>
    <ligand>
        <name>phosphoenolpyruvate</name>
        <dbReference type="ChEBI" id="CHEBI:58702"/>
    </ligand>
</feature>
<feature type="binding site" evidence="1">
    <location>
        <position position="169"/>
    </location>
    <ligand>
        <name>3-phosphoshikimate</name>
        <dbReference type="ChEBI" id="CHEBI:145989"/>
    </ligand>
</feature>
<feature type="binding site" evidence="1">
    <location>
        <position position="170"/>
    </location>
    <ligand>
        <name>3-phosphoshikimate</name>
        <dbReference type="ChEBI" id="CHEBI:145989"/>
    </ligand>
</feature>
<feature type="binding site" evidence="1">
    <location>
        <position position="171"/>
    </location>
    <ligand>
        <name>3-phosphoshikimate</name>
        <dbReference type="ChEBI" id="CHEBI:145989"/>
    </ligand>
</feature>
<feature type="binding site" evidence="1">
    <location>
        <position position="171"/>
    </location>
    <ligand>
        <name>phosphoenolpyruvate</name>
        <dbReference type="ChEBI" id="CHEBI:58702"/>
    </ligand>
</feature>
<feature type="binding site" evidence="1">
    <location>
        <position position="197"/>
    </location>
    <ligand>
        <name>3-phosphoshikimate</name>
        <dbReference type="ChEBI" id="CHEBI:145989"/>
    </ligand>
</feature>
<feature type="binding site" evidence="1">
    <location>
        <position position="313"/>
    </location>
    <ligand>
        <name>3-phosphoshikimate</name>
        <dbReference type="ChEBI" id="CHEBI:145989"/>
    </ligand>
</feature>
<feature type="binding site" evidence="1">
    <location>
        <position position="336"/>
    </location>
    <ligand>
        <name>3-phosphoshikimate</name>
        <dbReference type="ChEBI" id="CHEBI:145989"/>
    </ligand>
</feature>
<feature type="binding site" evidence="1">
    <location>
        <position position="340"/>
    </location>
    <ligand>
        <name>3-phosphoshikimate</name>
        <dbReference type="ChEBI" id="CHEBI:145989"/>
    </ligand>
</feature>
<feature type="binding site" evidence="1">
    <location>
        <position position="344"/>
    </location>
    <ligand>
        <name>phosphoenolpyruvate</name>
        <dbReference type="ChEBI" id="CHEBI:58702"/>
    </ligand>
</feature>
<feature type="binding site" evidence="1">
    <location>
        <position position="386"/>
    </location>
    <ligand>
        <name>phosphoenolpyruvate</name>
        <dbReference type="ChEBI" id="CHEBI:58702"/>
    </ligand>
</feature>
<feature type="binding site" evidence="1">
    <location>
        <position position="411"/>
    </location>
    <ligand>
        <name>phosphoenolpyruvate</name>
        <dbReference type="ChEBI" id="CHEBI:58702"/>
    </ligand>
</feature>
<proteinExistence type="inferred from homology"/>
<reference key="1">
    <citation type="journal article" date="2003" name="Nat. Biotechnol.">
        <title>The genome sequence of the entomopathogenic bacterium Photorhabdus luminescens.</title>
        <authorList>
            <person name="Duchaud E."/>
            <person name="Rusniok C."/>
            <person name="Frangeul L."/>
            <person name="Buchrieser C."/>
            <person name="Givaudan A."/>
            <person name="Taourit S."/>
            <person name="Bocs S."/>
            <person name="Boursaux-Eude C."/>
            <person name="Chandler M."/>
            <person name="Charles J.-F."/>
            <person name="Dassa E."/>
            <person name="Derose R."/>
            <person name="Derzelle S."/>
            <person name="Freyssinet G."/>
            <person name="Gaudriault S."/>
            <person name="Medigue C."/>
            <person name="Lanois A."/>
            <person name="Powell K."/>
            <person name="Siguier P."/>
            <person name="Vincent R."/>
            <person name="Wingate V."/>
            <person name="Zouine M."/>
            <person name="Glaser P."/>
            <person name="Boemare N."/>
            <person name="Danchin A."/>
            <person name="Kunst F."/>
        </authorList>
    </citation>
    <scope>NUCLEOTIDE SEQUENCE [LARGE SCALE GENOMIC DNA]</scope>
    <source>
        <strain>DSM 15139 / CIP 105565 / TT01</strain>
    </source>
</reference>
<protein>
    <recommendedName>
        <fullName evidence="1">3-phosphoshikimate 1-carboxyvinyltransferase</fullName>
        <ecNumber evidence="1">2.5.1.19</ecNumber>
    </recommendedName>
    <alternativeName>
        <fullName evidence="1">5-enolpyruvylshikimate-3-phosphate synthase</fullName>
        <shortName evidence="1">EPSP synthase</shortName>
        <shortName evidence="1">EPSPS</shortName>
    </alternativeName>
</protein>
<organism>
    <name type="scientific">Photorhabdus laumondii subsp. laumondii (strain DSM 15139 / CIP 105565 / TT01)</name>
    <name type="common">Photorhabdus luminescens subsp. laumondii</name>
    <dbReference type="NCBI Taxonomy" id="243265"/>
    <lineage>
        <taxon>Bacteria</taxon>
        <taxon>Pseudomonadati</taxon>
        <taxon>Pseudomonadota</taxon>
        <taxon>Gammaproteobacteria</taxon>
        <taxon>Enterobacterales</taxon>
        <taxon>Morganellaceae</taxon>
        <taxon>Photorhabdus</taxon>
    </lineage>
</organism>
<comment type="function">
    <text evidence="1">Catalyzes the transfer of the enolpyruvyl moiety of phosphoenolpyruvate (PEP) to the 5-hydroxyl of shikimate-3-phosphate (S3P) to produce enolpyruvyl shikimate-3-phosphate and inorganic phosphate.</text>
</comment>
<comment type="catalytic activity">
    <reaction evidence="1">
        <text>3-phosphoshikimate + phosphoenolpyruvate = 5-O-(1-carboxyvinyl)-3-phosphoshikimate + phosphate</text>
        <dbReference type="Rhea" id="RHEA:21256"/>
        <dbReference type="ChEBI" id="CHEBI:43474"/>
        <dbReference type="ChEBI" id="CHEBI:57701"/>
        <dbReference type="ChEBI" id="CHEBI:58702"/>
        <dbReference type="ChEBI" id="CHEBI:145989"/>
        <dbReference type="EC" id="2.5.1.19"/>
    </reaction>
    <physiologicalReaction direction="left-to-right" evidence="1">
        <dbReference type="Rhea" id="RHEA:21257"/>
    </physiologicalReaction>
</comment>
<comment type="pathway">
    <text evidence="1">Metabolic intermediate biosynthesis; chorismate biosynthesis; chorismate from D-erythrose 4-phosphate and phosphoenolpyruvate: step 6/7.</text>
</comment>
<comment type="subunit">
    <text evidence="1">Monomer.</text>
</comment>
<comment type="subcellular location">
    <subcellularLocation>
        <location evidence="1">Cytoplasm</location>
    </subcellularLocation>
</comment>
<comment type="similarity">
    <text evidence="1">Belongs to the EPSP synthase family.</text>
</comment>
<gene>
    <name evidence="1" type="primary">aroA</name>
    <name type="ordered locus">plu1620</name>
</gene>
<accession>Q7N6D5</accession>
<sequence length="428" mass="46564">MQSLMLQPISYINGTINLPGSKSVSNRALLLAAFAKGATCLTNLLDSDDIRHMLNALAALGISYRLSDDRTCCEVDGIGGLITHQGPIELFLGNAGTAMRPLTAALCLGKNDVVLTGEPRMKERPIGHLVDALRQGGAEIDYLEQENYPPLHVKGGFVGGKVMVDGRVSSQFLTALLMAAPLAENDSEIHIQGELVSKPYIDITLALMKSFGITINHDQYQIFHIKGRQQYVSPGHYLVEGDASSASYFLAAAAIKGGTVRVTGIGKNSLQGDTKFANVLEKMGAKIRWGDDFVECERGTLTGIDMDMNEIPDAAMTIATTALFAAGETVIRNIYNWRVKETDRLHAMATELRKVGAEVEEGVDYIRITPPPRLLPAEIGTYNDHRMAMCFSLVALSDTPVTILDPGCTAKTFPDYFNQLERLSQRKS</sequence>
<evidence type="ECO:0000255" key="1">
    <source>
        <dbReference type="HAMAP-Rule" id="MF_00210"/>
    </source>
</evidence>